<comment type="function">
    <text evidence="1">Catalyzes the condensation of isopentenyl diphosphate (IPP) with allylic pyrophosphates generating different type of terpenoids.</text>
</comment>
<comment type="cofactor">
    <cofactor evidence="1">
        <name>Mg(2+)</name>
        <dbReference type="ChEBI" id="CHEBI:18420"/>
    </cofactor>
    <text evidence="1">Binds 2 magnesium ions per subunit.</text>
</comment>
<comment type="subunit">
    <text evidence="1">Homodimer.</text>
</comment>
<comment type="similarity">
    <text evidence="1">Belongs to the UPP synthase family.</text>
</comment>
<organism>
    <name type="scientific">Streptomyces avermitilis (strain ATCC 31267 / DSM 46492 / JCM 5070 / NBRC 14893 / NCIMB 12804 / NRRL 8165 / MA-4680)</name>
    <dbReference type="NCBI Taxonomy" id="227882"/>
    <lineage>
        <taxon>Bacteria</taxon>
        <taxon>Bacillati</taxon>
        <taxon>Actinomycetota</taxon>
        <taxon>Actinomycetes</taxon>
        <taxon>Kitasatosporales</taxon>
        <taxon>Streptomycetaceae</taxon>
        <taxon>Streptomyces</taxon>
    </lineage>
</organism>
<gene>
    <name evidence="1" type="primary">uppS2</name>
    <name type="ordered locus">SAV_5629</name>
</gene>
<name>ISPT2_STRAW</name>
<sequence>MVVRGILGRQRREYRAPEPHPSGARAPKLPGELIPNHVACVMDGNGRWAKERGLPRTEGHKVGEGVVMDVLKGCIELGVKNLSLYAFSTENWKRSPEEVRFLMNFNRDVIRRRRDEMDALGIRIRWVGRMPKLWKSVVQELQIAQEQTKDNDAMTLYFCVNYGGRAELADAAKAMAEDVAAGRLDPAKVSEKTIQKYLYYPDMPDVDLFLRPSGEQRTSNYLLWQSSYAEMVFQDVLWPDFDRRDLWRACVEYASRDRRFGGAVPNEQLLEMERDMKGSEGVQDA</sequence>
<reference key="1">
    <citation type="journal article" date="2001" name="Proc. Natl. Acad. Sci. U.S.A.">
        <title>Genome sequence of an industrial microorganism Streptomyces avermitilis: deducing the ability of producing secondary metabolites.</title>
        <authorList>
            <person name="Omura S."/>
            <person name="Ikeda H."/>
            <person name="Ishikawa J."/>
            <person name="Hanamoto A."/>
            <person name="Takahashi C."/>
            <person name="Shinose M."/>
            <person name="Takahashi Y."/>
            <person name="Horikawa H."/>
            <person name="Nakazawa H."/>
            <person name="Osonoe T."/>
            <person name="Kikuchi H."/>
            <person name="Shiba T."/>
            <person name="Sakaki Y."/>
            <person name="Hattori M."/>
        </authorList>
    </citation>
    <scope>NUCLEOTIDE SEQUENCE [LARGE SCALE GENOMIC DNA]</scope>
    <source>
        <strain>ATCC 31267 / DSM 46492 / JCM 5070 / NBRC 14893 / NCIMB 12804 / NRRL 8165 / MA-4680</strain>
    </source>
</reference>
<reference key="2">
    <citation type="journal article" date="2003" name="Nat. Biotechnol.">
        <title>Complete genome sequence and comparative analysis of the industrial microorganism Streptomyces avermitilis.</title>
        <authorList>
            <person name="Ikeda H."/>
            <person name="Ishikawa J."/>
            <person name="Hanamoto A."/>
            <person name="Shinose M."/>
            <person name="Kikuchi H."/>
            <person name="Shiba T."/>
            <person name="Sakaki Y."/>
            <person name="Hattori M."/>
            <person name="Omura S."/>
        </authorList>
    </citation>
    <scope>NUCLEOTIDE SEQUENCE [LARGE SCALE GENOMIC DNA]</scope>
    <source>
        <strain>ATCC 31267 / DSM 46492 / JCM 5070 / NBRC 14893 / NCIMB 12804 / NRRL 8165 / MA-4680</strain>
    </source>
</reference>
<keyword id="KW-0460">Magnesium</keyword>
<keyword id="KW-0479">Metal-binding</keyword>
<keyword id="KW-1185">Reference proteome</keyword>
<keyword id="KW-0808">Transferase</keyword>
<dbReference type="EC" id="2.5.1.-" evidence="1"/>
<dbReference type="EMBL" id="BA000030">
    <property type="protein sequence ID" value="BAC73341.1"/>
    <property type="molecule type" value="Genomic_DNA"/>
</dbReference>
<dbReference type="RefSeq" id="WP_010987031.1">
    <property type="nucleotide sequence ID" value="NZ_JZJK01000057.1"/>
</dbReference>
<dbReference type="SMR" id="Q82BS5"/>
<dbReference type="GeneID" id="41542717"/>
<dbReference type="KEGG" id="sma:SAVERM_5629"/>
<dbReference type="eggNOG" id="COG0020">
    <property type="taxonomic scope" value="Bacteria"/>
</dbReference>
<dbReference type="HOGENOM" id="CLU_038505_1_2_11"/>
<dbReference type="OrthoDB" id="4191603at2"/>
<dbReference type="Proteomes" id="UP000000428">
    <property type="component" value="Chromosome"/>
</dbReference>
<dbReference type="GO" id="GO:0005829">
    <property type="term" value="C:cytosol"/>
    <property type="evidence" value="ECO:0007669"/>
    <property type="project" value="TreeGrafter"/>
</dbReference>
<dbReference type="GO" id="GO:0005886">
    <property type="term" value="C:plasma membrane"/>
    <property type="evidence" value="ECO:0007669"/>
    <property type="project" value="TreeGrafter"/>
</dbReference>
<dbReference type="GO" id="GO:0008834">
    <property type="term" value="F:ditrans,polycis-undecaprenyl-diphosphate synthase [(2E,6E)-farnesyl-diphosphate specific] activity"/>
    <property type="evidence" value="ECO:0007669"/>
    <property type="project" value="TreeGrafter"/>
</dbReference>
<dbReference type="GO" id="GO:0000287">
    <property type="term" value="F:magnesium ion binding"/>
    <property type="evidence" value="ECO:0007669"/>
    <property type="project" value="UniProtKB-UniRule"/>
</dbReference>
<dbReference type="GO" id="GO:0030145">
    <property type="term" value="F:manganese ion binding"/>
    <property type="evidence" value="ECO:0007669"/>
    <property type="project" value="TreeGrafter"/>
</dbReference>
<dbReference type="GO" id="GO:0033850">
    <property type="term" value="F:Z-farnesyl diphosphate synthase activity"/>
    <property type="evidence" value="ECO:0007669"/>
    <property type="project" value="TreeGrafter"/>
</dbReference>
<dbReference type="GO" id="GO:0016094">
    <property type="term" value="P:polyprenol biosynthetic process"/>
    <property type="evidence" value="ECO:0007669"/>
    <property type="project" value="TreeGrafter"/>
</dbReference>
<dbReference type="CDD" id="cd00475">
    <property type="entry name" value="Cis_IPPS"/>
    <property type="match status" value="1"/>
</dbReference>
<dbReference type="FunFam" id="3.40.1180.10:FF:000004">
    <property type="entry name" value="Isoprenyl transferase"/>
    <property type="match status" value="1"/>
</dbReference>
<dbReference type="Gene3D" id="3.40.1180.10">
    <property type="entry name" value="Decaprenyl diphosphate synthase-like"/>
    <property type="match status" value="1"/>
</dbReference>
<dbReference type="HAMAP" id="MF_01139">
    <property type="entry name" value="ISPT"/>
    <property type="match status" value="1"/>
</dbReference>
<dbReference type="InterPro" id="IPR001441">
    <property type="entry name" value="UPP_synth-like"/>
</dbReference>
<dbReference type="InterPro" id="IPR018520">
    <property type="entry name" value="UPP_synth-like_CS"/>
</dbReference>
<dbReference type="InterPro" id="IPR036424">
    <property type="entry name" value="UPP_synth-like_sf"/>
</dbReference>
<dbReference type="NCBIfam" id="NF011404">
    <property type="entry name" value="PRK14829.1"/>
    <property type="match status" value="1"/>
</dbReference>
<dbReference type="NCBIfam" id="TIGR00055">
    <property type="entry name" value="uppS"/>
    <property type="match status" value="1"/>
</dbReference>
<dbReference type="PANTHER" id="PTHR10291:SF0">
    <property type="entry name" value="DEHYDRODOLICHYL DIPHOSPHATE SYNTHASE 2"/>
    <property type="match status" value="1"/>
</dbReference>
<dbReference type="PANTHER" id="PTHR10291">
    <property type="entry name" value="DEHYDRODOLICHYL DIPHOSPHATE SYNTHASE FAMILY MEMBER"/>
    <property type="match status" value="1"/>
</dbReference>
<dbReference type="Pfam" id="PF01255">
    <property type="entry name" value="Prenyltransf"/>
    <property type="match status" value="1"/>
</dbReference>
<dbReference type="SUPFAM" id="SSF64005">
    <property type="entry name" value="Undecaprenyl diphosphate synthase"/>
    <property type="match status" value="1"/>
</dbReference>
<dbReference type="PROSITE" id="PS01066">
    <property type="entry name" value="UPP_SYNTHASE"/>
    <property type="match status" value="1"/>
</dbReference>
<evidence type="ECO:0000255" key="1">
    <source>
        <dbReference type="HAMAP-Rule" id="MF_01139"/>
    </source>
</evidence>
<evidence type="ECO:0000256" key="2">
    <source>
        <dbReference type="SAM" id="MobiDB-lite"/>
    </source>
</evidence>
<feature type="chain" id="PRO_0000123684" description="Isoprenyl transferase 2">
    <location>
        <begin position="1"/>
        <end position="285"/>
    </location>
</feature>
<feature type="region of interest" description="Disordered" evidence="2">
    <location>
        <begin position="11"/>
        <end position="30"/>
    </location>
</feature>
<feature type="active site" evidence="1">
    <location>
        <position position="43"/>
    </location>
</feature>
<feature type="active site" description="Proton acceptor" evidence="1">
    <location>
        <position position="91"/>
    </location>
</feature>
<feature type="binding site" evidence="1">
    <location>
        <position position="43"/>
    </location>
    <ligand>
        <name>Mg(2+)</name>
        <dbReference type="ChEBI" id="CHEBI:18420"/>
    </ligand>
</feature>
<feature type="binding site" evidence="1">
    <location>
        <begin position="44"/>
        <end position="47"/>
    </location>
    <ligand>
        <name>substrate</name>
    </ligand>
</feature>
<feature type="binding site" evidence="1">
    <location>
        <position position="48"/>
    </location>
    <ligand>
        <name>substrate</name>
    </ligand>
</feature>
<feature type="binding site" evidence="1">
    <location>
        <position position="56"/>
    </location>
    <ligand>
        <name>substrate</name>
    </ligand>
</feature>
<feature type="binding site" evidence="1">
    <location>
        <position position="60"/>
    </location>
    <ligand>
        <name>substrate</name>
    </ligand>
</feature>
<feature type="binding site" evidence="1">
    <location>
        <begin position="88"/>
        <end position="90"/>
    </location>
    <ligand>
        <name>substrate</name>
    </ligand>
</feature>
<feature type="binding site" evidence="1">
    <location>
        <position position="92"/>
    </location>
    <ligand>
        <name>substrate</name>
    </ligand>
</feature>
<feature type="binding site" evidence="1">
    <location>
        <position position="94"/>
    </location>
    <ligand>
        <name>substrate</name>
    </ligand>
</feature>
<feature type="binding site" evidence="1">
    <location>
        <position position="211"/>
    </location>
    <ligand>
        <name>substrate</name>
    </ligand>
</feature>
<feature type="binding site" evidence="1">
    <location>
        <begin position="217"/>
        <end position="219"/>
    </location>
    <ligand>
        <name>substrate</name>
    </ligand>
</feature>
<feature type="binding site" evidence="1">
    <location>
        <position position="230"/>
    </location>
    <ligand>
        <name>Mg(2+)</name>
        <dbReference type="ChEBI" id="CHEBI:18420"/>
    </ligand>
</feature>
<accession>Q82BS5</accession>
<protein>
    <recommendedName>
        <fullName evidence="1">Isoprenyl transferase 2</fullName>
        <ecNumber evidence="1">2.5.1.-</ecNumber>
    </recommendedName>
</protein>
<proteinExistence type="inferred from homology"/>